<proteinExistence type="inferred from homology"/>
<organism>
    <name type="scientific">Shigella dysenteriae serotype 1 (strain Sd197)</name>
    <dbReference type="NCBI Taxonomy" id="300267"/>
    <lineage>
        <taxon>Bacteria</taxon>
        <taxon>Pseudomonadati</taxon>
        <taxon>Pseudomonadota</taxon>
        <taxon>Gammaproteobacteria</taxon>
        <taxon>Enterobacterales</taxon>
        <taxon>Enterobacteriaceae</taxon>
        <taxon>Shigella</taxon>
    </lineage>
</organism>
<accession>Q32BG8</accession>
<reference key="1">
    <citation type="journal article" date="2005" name="Nucleic Acids Res.">
        <title>Genome dynamics and diversity of Shigella species, the etiologic agents of bacillary dysentery.</title>
        <authorList>
            <person name="Yang F."/>
            <person name="Yang J."/>
            <person name="Zhang X."/>
            <person name="Chen L."/>
            <person name="Jiang Y."/>
            <person name="Yan Y."/>
            <person name="Tang X."/>
            <person name="Wang J."/>
            <person name="Xiong Z."/>
            <person name="Dong J."/>
            <person name="Xue Y."/>
            <person name="Zhu Y."/>
            <person name="Xu X."/>
            <person name="Sun L."/>
            <person name="Chen S."/>
            <person name="Nie H."/>
            <person name="Peng J."/>
            <person name="Xu J."/>
            <person name="Wang Y."/>
            <person name="Yuan Z."/>
            <person name="Wen Y."/>
            <person name="Yao Z."/>
            <person name="Shen Y."/>
            <person name="Qiang B."/>
            <person name="Hou Y."/>
            <person name="Yu J."/>
            <person name="Jin Q."/>
        </authorList>
    </citation>
    <scope>NUCLEOTIDE SEQUENCE [LARGE SCALE GENOMIC DNA]</scope>
    <source>
        <strain>Sd197</strain>
    </source>
</reference>
<comment type="function">
    <text evidence="1">One of the primary rRNA binding proteins, it binds directly to 16S rRNA where it helps nucleate assembly of the platform of the 30S subunit by binding and bridging several RNA helices of the 16S rRNA.</text>
</comment>
<comment type="function">
    <text evidence="1">Forms an intersubunit bridge (bridge B4) with the 23S rRNA of the 50S subunit in the ribosome.</text>
</comment>
<comment type="subunit">
    <text evidence="1">Part of the 30S ribosomal subunit. Forms a bridge to the 50S subunit in the 70S ribosome, contacting the 23S rRNA.</text>
</comment>
<comment type="similarity">
    <text evidence="1">Belongs to the universal ribosomal protein uS15 family.</text>
</comment>
<gene>
    <name evidence="1" type="primary">rpsO</name>
    <name type="ordered locus">SDY_3344</name>
</gene>
<feature type="chain" id="PRO_0000115535" description="Small ribosomal subunit protein uS15">
    <location>
        <begin position="1"/>
        <end position="89"/>
    </location>
</feature>
<evidence type="ECO:0000255" key="1">
    <source>
        <dbReference type="HAMAP-Rule" id="MF_01343"/>
    </source>
</evidence>
<evidence type="ECO:0000305" key="2"/>
<name>RS15_SHIDS</name>
<dbReference type="EMBL" id="CP000034">
    <property type="protein sequence ID" value="ABB63337.1"/>
    <property type="molecule type" value="Genomic_DNA"/>
</dbReference>
<dbReference type="RefSeq" id="WP_000059466.1">
    <property type="nucleotide sequence ID" value="NC_007606.1"/>
</dbReference>
<dbReference type="RefSeq" id="YP_404828.1">
    <property type="nucleotide sequence ID" value="NC_007606.1"/>
</dbReference>
<dbReference type="SMR" id="Q32BG8"/>
<dbReference type="STRING" id="300267.SDY_3344"/>
<dbReference type="EnsemblBacteria" id="ABB63337">
    <property type="protein sequence ID" value="ABB63337"/>
    <property type="gene ID" value="SDY_3344"/>
</dbReference>
<dbReference type="GeneID" id="93778818"/>
<dbReference type="KEGG" id="sdy:SDY_3344"/>
<dbReference type="PATRIC" id="fig|300267.13.peg.3998"/>
<dbReference type="HOGENOM" id="CLU_148518_0_0_6"/>
<dbReference type="Proteomes" id="UP000002716">
    <property type="component" value="Chromosome"/>
</dbReference>
<dbReference type="GO" id="GO:0022627">
    <property type="term" value="C:cytosolic small ribosomal subunit"/>
    <property type="evidence" value="ECO:0007669"/>
    <property type="project" value="TreeGrafter"/>
</dbReference>
<dbReference type="GO" id="GO:0019843">
    <property type="term" value="F:rRNA binding"/>
    <property type="evidence" value="ECO:0007669"/>
    <property type="project" value="UniProtKB-UniRule"/>
</dbReference>
<dbReference type="GO" id="GO:0003735">
    <property type="term" value="F:structural constituent of ribosome"/>
    <property type="evidence" value="ECO:0007669"/>
    <property type="project" value="InterPro"/>
</dbReference>
<dbReference type="GO" id="GO:0006412">
    <property type="term" value="P:translation"/>
    <property type="evidence" value="ECO:0007669"/>
    <property type="project" value="UniProtKB-UniRule"/>
</dbReference>
<dbReference type="CDD" id="cd00353">
    <property type="entry name" value="Ribosomal_S15p_S13e"/>
    <property type="match status" value="1"/>
</dbReference>
<dbReference type="FunFam" id="1.10.287.10:FF:000002">
    <property type="entry name" value="30S ribosomal protein S15"/>
    <property type="match status" value="1"/>
</dbReference>
<dbReference type="Gene3D" id="6.10.250.3130">
    <property type="match status" value="1"/>
</dbReference>
<dbReference type="Gene3D" id="1.10.287.10">
    <property type="entry name" value="S15/NS1, RNA-binding"/>
    <property type="match status" value="1"/>
</dbReference>
<dbReference type="HAMAP" id="MF_01343_B">
    <property type="entry name" value="Ribosomal_uS15_B"/>
    <property type="match status" value="1"/>
</dbReference>
<dbReference type="InterPro" id="IPR000589">
    <property type="entry name" value="Ribosomal_uS15"/>
</dbReference>
<dbReference type="InterPro" id="IPR005290">
    <property type="entry name" value="Ribosomal_uS15_bac-type"/>
</dbReference>
<dbReference type="InterPro" id="IPR009068">
    <property type="entry name" value="uS15_NS1_RNA-bd_sf"/>
</dbReference>
<dbReference type="NCBIfam" id="TIGR00952">
    <property type="entry name" value="S15_bact"/>
    <property type="match status" value="1"/>
</dbReference>
<dbReference type="PANTHER" id="PTHR23321">
    <property type="entry name" value="RIBOSOMAL PROTEIN S15, BACTERIAL AND ORGANELLAR"/>
    <property type="match status" value="1"/>
</dbReference>
<dbReference type="PANTHER" id="PTHR23321:SF26">
    <property type="entry name" value="SMALL RIBOSOMAL SUBUNIT PROTEIN US15M"/>
    <property type="match status" value="1"/>
</dbReference>
<dbReference type="Pfam" id="PF00312">
    <property type="entry name" value="Ribosomal_S15"/>
    <property type="match status" value="1"/>
</dbReference>
<dbReference type="SMART" id="SM01387">
    <property type="entry name" value="Ribosomal_S15"/>
    <property type="match status" value="1"/>
</dbReference>
<dbReference type="SUPFAM" id="SSF47060">
    <property type="entry name" value="S15/NS1 RNA-binding domain"/>
    <property type="match status" value="1"/>
</dbReference>
<dbReference type="PROSITE" id="PS00362">
    <property type="entry name" value="RIBOSOMAL_S15"/>
    <property type="match status" value="1"/>
</dbReference>
<sequence>MSLSTEATAKIVSEFGRDANDTGSTEVQVALLTAQINHLQGHFAEHKKDHHSRRGLLRMVSQRRKLLDYLKRKDVARYTQLIERLGLRR</sequence>
<keyword id="KW-1185">Reference proteome</keyword>
<keyword id="KW-0687">Ribonucleoprotein</keyword>
<keyword id="KW-0689">Ribosomal protein</keyword>
<keyword id="KW-0694">RNA-binding</keyword>
<keyword id="KW-0699">rRNA-binding</keyword>
<protein>
    <recommendedName>
        <fullName evidence="1">Small ribosomal subunit protein uS15</fullName>
    </recommendedName>
    <alternativeName>
        <fullName evidence="2">30S ribosomal protein S15</fullName>
    </alternativeName>
</protein>